<proteinExistence type="inferred from homology"/>
<protein>
    <recommendedName>
        <fullName evidence="1">Large ribosomal subunit protein uL1</fullName>
    </recommendedName>
    <alternativeName>
        <fullName evidence="2">50S ribosomal protein L1</fullName>
    </alternativeName>
</protein>
<sequence>MAKLTKRQKAIAAAIEANKVYTLEEAVQVLNNLPAAKFKESLDVSVNLGVDPRKSDQVVRGATTLPAGTGKTVRVAVFAQGAAAEAAKAEGADIVGFDDLAESIQQGNLDFDVVIAAPDAMRVVGKLGTILGPRGLMPNPKVGTVTPDVANAVKNAKAGQARYRVDKAGIIHAAIGQVGFTAEAIRQNVETLVADLKKLKPATSKGVYIKKITLSSTMGPGLTVDVNNVTN</sequence>
<comment type="function">
    <text evidence="1">Binds directly to 23S rRNA. The L1 stalk is quite mobile in the ribosome, and is involved in E site tRNA release.</text>
</comment>
<comment type="function">
    <text evidence="1">Protein L1 is also a translational repressor protein, it controls the translation of the L11 operon by binding to its mRNA.</text>
</comment>
<comment type="subunit">
    <text evidence="1">Part of the 50S ribosomal subunit.</text>
</comment>
<comment type="similarity">
    <text evidence="1">Belongs to the universal ribosomal protein uL1 family.</text>
</comment>
<gene>
    <name evidence="1" type="primary">rplA</name>
    <name type="ordered locus">ACIAD0304</name>
</gene>
<evidence type="ECO:0000255" key="1">
    <source>
        <dbReference type="HAMAP-Rule" id="MF_01318"/>
    </source>
</evidence>
<evidence type="ECO:0000305" key="2"/>
<dbReference type="EMBL" id="CR543861">
    <property type="protein sequence ID" value="CAG67264.1"/>
    <property type="molecule type" value="Genomic_DNA"/>
</dbReference>
<dbReference type="RefSeq" id="WP_011182016.1">
    <property type="nucleotide sequence ID" value="NC_005966.1"/>
</dbReference>
<dbReference type="SMR" id="Q6FF93"/>
<dbReference type="STRING" id="202950.GCA_001485005_00578"/>
<dbReference type="GeneID" id="45232818"/>
<dbReference type="KEGG" id="aci:ACIAD0304"/>
<dbReference type="eggNOG" id="COG0081">
    <property type="taxonomic scope" value="Bacteria"/>
</dbReference>
<dbReference type="HOGENOM" id="CLU_062853_0_0_6"/>
<dbReference type="OrthoDB" id="9803740at2"/>
<dbReference type="BioCyc" id="ASP62977:ACIAD_RS01445-MONOMER"/>
<dbReference type="Proteomes" id="UP000000430">
    <property type="component" value="Chromosome"/>
</dbReference>
<dbReference type="GO" id="GO:0022625">
    <property type="term" value="C:cytosolic large ribosomal subunit"/>
    <property type="evidence" value="ECO:0007669"/>
    <property type="project" value="TreeGrafter"/>
</dbReference>
<dbReference type="GO" id="GO:0019843">
    <property type="term" value="F:rRNA binding"/>
    <property type="evidence" value="ECO:0007669"/>
    <property type="project" value="UniProtKB-UniRule"/>
</dbReference>
<dbReference type="GO" id="GO:0003735">
    <property type="term" value="F:structural constituent of ribosome"/>
    <property type="evidence" value="ECO:0007669"/>
    <property type="project" value="InterPro"/>
</dbReference>
<dbReference type="GO" id="GO:0000049">
    <property type="term" value="F:tRNA binding"/>
    <property type="evidence" value="ECO:0007669"/>
    <property type="project" value="UniProtKB-KW"/>
</dbReference>
<dbReference type="GO" id="GO:0006417">
    <property type="term" value="P:regulation of translation"/>
    <property type="evidence" value="ECO:0007669"/>
    <property type="project" value="UniProtKB-KW"/>
</dbReference>
<dbReference type="GO" id="GO:0006412">
    <property type="term" value="P:translation"/>
    <property type="evidence" value="ECO:0007669"/>
    <property type="project" value="UniProtKB-UniRule"/>
</dbReference>
<dbReference type="CDD" id="cd00403">
    <property type="entry name" value="Ribosomal_L1"/>
    <property type="match status" value="1"/>
</dbReference>
<dbReference type="FunFam" id="3.40.50.790:FF:000001">
    <property type="entry name" value="50S ribosomal protein L1"/>
    <property type="match status" value="1"/>
</dbReference>
<dbReference type="Gene3D" id="3.30.190.20">
    <property type="match status" value="1"/>
</dbReference>
<dbReference type="Gene3D" id="3.40.50.790">
    <property type="match status" value="1"/>
</dbReference>
<dbReference type="HAMAP" id="MF_01318_B">
    <property type="entry name" value="Ribosomal_uL1_B"/>
    <property type="match status" value="1"/>
</dbReference>
<dbReference type="InterPro" id="IPR005878">
    <property type="entry name" value="Ribosom_uL1_bac-type"/>
</dbReference>
<dbReference type="InterPro" id="IPR002143">
    <property type="entry name" value="Ribosomal_uL1"/>
</dbReference>
<dbReference type="InterPro" id="IPR023674">
    <property type="entry name" value="Ribosomal_uL1-like"/>
</dbReference>
<dbReference type="InterPro" id="IPR028364">
    <property type="entry name" value="Ribosomal_uL1/biogenesis"/>
</dbReference>
<dbReference type="InterPro" id="IPR016095">
    <property type="entry name" value="Ribosomal_uL1_3-a/b-sand"/>
</dbReference>
<dbReference type="InterPro" id="IPR023673">
    <property type="entry name" value="Ribosomal_uL1_CS"/>
</dbReference>
<dbReference type="NCBIfam" id="TIGR01169">
    <property type="entry name" value="rplA_bact"/>
    <property type="match status" value="1"/>
</dbReference>
<dbReference type="PANTHER" id="PTHR36427">
    <property type="entry name" value="54S RIBOSOMAL PROTEIN L1, MITOCHONDRIAL"/>
    <property type="match status" value="1"/>
</dbReference>
<dbReference type="PANTHER" id="PTHR36427:SF3">
    <property type="entry name" value="LARGE RIBOSOMAL SUBUNIT PROTEIN UL1M"/>
    <property type="match status" value="1"/>
</dbReference>
<dbReference type="Pfam" id="PF00687">
    <property type="entry name" value="Ribosomal_L1"/>
    <property type="match status" value="1"/>
</dbReference>
<dbReference type="PIRSF" id="PIRSF002155">
    <property type="entry name" value="Ribosomal_L1"/>
    <property type="match status" value="1"/>
</dbReference>
<dbReference type="SUPFAM" id="SSF56808">
    <property type="entry name" value="Ribosomal protein L1"/>
    <property type="match status" value="1"/>
</dbReference>
<dbReference type="PROSITE" id="PS01199">
    <property type="entry name" value="RIBOSOMAL_L1"/>
    <property type="match status" value="1"/>
</dbReference>
<reference key="1">
    <citation type="journal article" date="2004" name="Nucleic Acids Res.">
        <title>Unique features revealed by the genome sequence of Acinetobacter sp. ADP1, a versatile and naturally transformation competent bacterium.</title>
        <authorList>
            <person name="Barbe V."/>
            <person name="Vallenet D."/>
            <person name="Fonknechten N."/>
            <person name="Kreimeyer A."/>
            <person name="Oztas S."/>
            <person name="Labarre L."/>
            <person name="Cruveiller S."/>
            <person name="Robert C."/>
            <person name="Duprat S."/>
            <person name="Wincker P."/>
            <person name="Ornston L.N."/>
            <person name="Weissenbach J."/>
            <person name="Marliere P."/>
            <person name="Cohen G.N."/>
            <person name="Medigue C."/>
        </authorList>
    </citation>
    <scope>NUCLEOTIDE SEQUENCE [LARGE SCALE GENOMIC DNA]</scope>
    <source>
        <strain>ATCC 33305 / BD413 / ADP1</strain>
    </source>
</reference>
<feature type="chain" id="PRO_0000125602" description="Large ribosomal subunit protein uL1">
    <location>
        <begin position="1"/>
        <end position="231"/>
    </location>
</feature>
<accession>Q6FF93</accession>
<name>RL1_ACIAD</name>
<organism>
    <name type="scientific">Acinetobacter baylyi (strain ATCC 33305 / BD413 / ADP1)</name>
    <dbReference type="NCBI Taxonomy" id="62977"/>
    <lineage>
        <taxon>Bacteria</taxon>
        <taxon>Pseudomonadati</taxon>
        <taxon>Pseudomonadota</taxon>
        <taxon>Gammaproteobacteria</taxon>
        <taxon>Moraxellales</taxon>
        <taxon>Moraxellaceae</taxon>
        <taxon>Acinetobacter</taxon>
    </lineage>
</organism>
<keyword id="KW-0678">Repressor</keyword>
<keyword id="KW-0687">Ribonucleoprotein</keyword>
<keyword id="KW-0689">Ribosomal protein</keyword>
<keyword id="KW-0694">RNA-binding</keyword>
<keyword id="KW-0699">rRNA-binding</keyword>
<keyword id="KW-0810">Translation regulation</keyword>
<keyword id="KW-0820">tRNA-binding</keyword>